<name>TRMB_PSEPW</name>
<accession>B1J2G9</accession>
<organism>
    <name type="scientific">Pseudomonas putida (strain W619)</name>
    <dbReference type="NCBI Taxonomy" id="390235"/>
    <lineage>
        <taxon>Bacteria</taxon>
        <taxon>Pseudomonadati</taxon>
        <taxon>Pseudomonadota</taxon>
        <taxon>Gammaproteobacteria</taxon>
        <taxon>Pseudomonadales</taxon>
        <taxon>Pseudomonadaceae</taxon>
        <taxon>Pseudomonas</taxon>
    </lineage>
</organism>
<dbReference type="EC" id="2.1.1.33" evidence="2"/>
<dbReference type="EMBL" id="CP000949">
    <property type="protein sequence ID" value="ACA70868.1"/>
    <property type="molecule type" value="Genomic_DNA"/>
</dbReference>
<dbReference type="SMR" id="B1J2G9"/>
<dbReference type="STRING" id="390235.PputW619_0362"/>
<dbReference type="KEGG" id="ppw:PputW619_0362"/>
<dbReference type="eggNOG" id="COG0220">
    <property type="taxonomic scope" value="Bacteria"/>
</dbReference>
<dbReference type="HOGENOM" id="CLU_050910_0_1_6"/>
<dbReference type="OrthoDB" id="9802090at2"/>
<dbReference type="UniPathway" id="UPA00989"/>
<dbReference type="GO" id="GO:0043527">
    <property type="term" value="C:tRNA methyltransferase complex"/>
    <property type="evidence" value="ECO:0007669"/>
    <property type="project" value="TreeGrafter"/>
</dbReference>
<dbReference type="GO" id="GO:0008176">
    <property type="term" value="F:tRNA (guanine(46)-N7)-methyltransferase activity"/>
    <property type="evidence" value="ECO:0007669"/>
    <property type="project" value="UniProtKB-UniRule"/>
</dbReference>
<dbReference type="CDD" id="cd02440">
    <property type="entry name" value="AdoMet_MTases"/>
    <property type="match status" value="1"/>
</dbReference>
<dbReference type="FunFam" id="3.40.50.150:FF:000035">
    <property type="entry name" value="tRNA (guanine-N(7)-)-methyltransferase"/>
    <property type="match status" value="1"/>
</dbReference>
<dbReference type="Gene3D" id="3.40.50.150">
    <property type="entry name" value="Vaccinia Virus protein VP39"/>
    <property type="match status" value="1"/>
</dbReference>
<dbReference type="HAMAP" id="MF_01057">
    <property type="entry name" value="tRNA_methyltr_TrmB"/>
    <property type="match status" value="1"/>
</dbReference>
<dbReference type="InterPro" id="IPR029063">
    <property type="entry name" value="SAM-dependent_MTases_sf"/>
</dbReference>
<dbReference type="InterPro" id="IPR003358">
    <property type="entry name" value="tRNA_(Gua-N-7)_MeTrfase_Trmb"/>
</dbReference>
<dbReference type="InterPro" id="IPR055361">
    <property type="entry name" value="tRNA_methyltr_TrmB_bact"/>
</dbReference>
<dbReference type="NCBIfam" id="TIGR00091">
    <property type="entry name" value="tRNA (guanosine(46)-N7)-methyltransferase TrmB"/>
    <property type="match status" value="1"/>
</dbReference>
<dbReference type="PANTHER" id="PTHR23417">
    <property type="entry name" value="3-DEOXY-D-MANNO-OCTULOSONIC-ACID TRANSFERASE/TRNA GUANINE-N 7 - -METHYLTRANSFERASE"/>
    <property type="match status" value="1"/>
</dbReference>
<dbReference type="PANTHER" id="PTHR23417:SF14">
    <property type="entry name" value="PENTACOTRIPEPTIDE-REPEAT REGION OF PRORP DOMAIN-CONTAINING PROTEIN"/>
    <property type="match status" value="1"/>
</dbReference>
<dbReference type="Pfam" id="PF02390">
    <property type="entry name" value="Methyltransf_4"/>
    <property type="match status" value="1"/>
</dbReference>
<dbReference type="SUPFAM" id="SSF53335">
    <property type="entry name" value="S-adenosyl-L-methionine-dependent methyltransferases"/>
    <property type="match status" value="1"/>
</dbReference>
<dbReference type="PROSITE" id="PS51625">
    <property type="entry name" value="SAM_MT_TRMB"/>
    <property type="match status" value="1"/>
</dbReference>
<sequence>MTESQDTPITTDGEARPHRRIKSFVMRAGRMTEGQQRGLDQGGPLYILPLAESPVDYDQVFGRSAPRTLEIGFGMGHSLLEMAAAAPEQDFIGVEVHRPGVGALLNGVLTEGLKNLRVYDCDAIEVLNRCVADNSLDRLMLFFPDPWHKARHHKRRIVQLEFAELVRRKLKPGGIFHMATDWEPYAEYMLEVMSAAPGYRNLAADGAYVPRPEERPITKFERRGERLGHGVWDLKFEKVG</sequence>
<comment type="function">
    <text evidence="2">Catalyzes the formation of N(7)-methylguanine at position 46 (m7G46) in tRNA.</text>
</comment>
<comment type="catalytic activity">
    <reaction evidence="2">
        <text>guanosine(46) in tRNA + S-adenosyl-L-methionine = N(7)-methylguanosine(46) in tRNA + S-adenosyl-L-homocysteine</text>
        <dbReference type="Rhea" id="RHEA:42708"/>
        <dbReference type="Rhea" id="RHEA-COMP:10188"/>
        <dbReference type="Rhea" id="RHEA-COMP:10189"/>
        <dbReference type="ChEBI" id="CHEBI:57856"/>
        <dbReference type="ChEBI" id="CHEBI:59789"/>
        <dbReference type="ChEBI" id="CHEBI:74269"/>
        <dbReference type="ChEBI" id="CHEBI:74480"/>
        <dbReference type="EC" id="2.1.1.33"/>
    </reaction>
</comment>
<comment type="pathway">
    <text evidence="2">tRNA modification; N(7)-methylguanine-tRNA biosynthesis.</text>
</comment>
<comment type="similarity">
    <text evidence="2">Belongs to the class I-like SAM-binding methyltransferase superfamily. TrmB family.</text>
</comment>
<evidence type="ECO:0000250" key="1"/>
<evidence type="ECO:0000255" key="2">
    <source>
        <dbReference type="HAMAP-Rule" id="MF_01057"/>
    </source>
</evidence>
<evidence type="ECO:0000256" key="3">
    <source>
        <dbReference type="SAM" id="MobiDB-lite"/>
    </source>
</evidence>
<keyword id="KW-0489">Methyltransferase</keyword>
<keyword id="KW-0949">S-adenosyl-L-methionine</keyword>
<keyword id="KW-0808">Transferase</keyword>
<keyword id="KW-0819">tRNA processing</keyword>
<feature type="chain" id="PRO_1000136359" description="tRNA (guanine-N(7)-)-methyltransferase">
    <location>
        <begin position="1"/>
        <end position="240"/>
    </location>
</feature>
<feature type="region of interest" description="Disordered" evidence="3">
    <location>
        <begin position="1"/>
        <end position="20"/>
    </location>
</feature>
<feature type="compositionally biased region" description="Polar residues" evidence="3">
    <location>
        <begin position="1"/>
        <end position="10"/>
    </location>
</feature>
<feature type="active site" evidence="1">
    <location>
        <position position="145"/>
    </location>
</feature>
<feature type="binding site" evidence="2">
    <location>
        <position position="70"/>
    </location>
    <ligand>
        <name>S-adenosyl-L-methionine</name>
        <dbReference type="ChEBI" id="CHEBI:59789"/>
    </ligand>
</feature>
<feature type="binding site" evidence="2">
    <location>
        <position position="95"/>
    </location>
    <ligand>
        <name>S-adenosyl-L-methionine</name>
        <dbReference type="ChEBI" id="CHEBI:59789"/>
    </ligand>
</feature>
<feature type="binding site" evidence="2">
    <location>
        <position position="122"/>
    </location>
    <ligand>
        <name>S-adenosyl-L-methionine</name>
        <dbReference type="ChEBI" id="CHEBI:59789"/>
    </ligand>
</feature>
<feature type="binding site" evidence="2">
    <location>
        <position position="145"/>
    </location>
    <ligand>
        <name>S-adenosyl-L-methionine</name>
        <dbReference type="ChEBI" id="CHEBI:59789"/>
    </ligand>
</feature>
<feature type="binding site" evidence="2">
    <location>
        <position position="149"/>
    </location>
    <ligand>
        <name>substrate</name>
    </ligand>
</feature>
<feature type="binding site" evidence="2">
    <location>
        <position position="181"/>
    </location>
    <ligand>
        <name>substrate</name>
    </ligand>
</feature>
<feature type="binding site" evidence="2">
    <location>
        <begin position="218"/>
        <end position="221"/>
    </location>
    <ligand>
        <name>substrate</name>
    </ligand>
</feature>
<reference key="1">
    <citation type="submission" date="2008-02" db="EMBL/GenBank/DDBJ databases">
        <title>Complete sequence of Pseudomonas putida W619.</title>
        <authorList>
            <person name="Copeland A."/>
            <person name="Lucas S."/>
            <person name="Lapidus A."/>
            <person name="Barry K."/>
            <person name="Detter J.C."/>
            <person name="Glavina del Rio T."/>
            <person name="Dalin E."/>
            <person name="Tice H."/>
            <person name="Pitluck S."/>
            <person name="Chain P."/>
            <person name="Malfatti S."/>
            <person name="Shin M."/>
            <person name="Vergez L."/>
            <person name="Schmutz J."/>
            <person name="Larimer F."/>
            <person name="Land M."/>
            <person name="Hauser L."/>
            <person name="Kyrpides N."/>
            <person name="Kim E."/>
            <person name="Taghavi S."/>
            <person name="Vangronsveld D."/>
            <person name="van der Lelie D."/>
            <person name="Richardson P."/>
        </authorList>
    </citation>
    <scope>NUCLEOTIDE SEQUENCE [LARGE SCALE GENOMIC DNA]</scope>
    <source>
        <strain>W619</strain>
    </source>
</reference>
<proteinExistence type="inferred from homology"/>
<gene>
    <name evidence="2" type="primary">trmB</name>
    <name type="ordered locus">PputW619_0362</name>
</gene>
<protein>
    <recommendedName>
        <fullName evidence="2">tRNA (guanine-N(7)-)-methyltransferase</fullName>
        <ecNumber evidence="2">2.1.1.33</ecNumber>
    </recommendedName>
    <alternativeName>
        <fullName evidence="2">tRNA (guanine(46)-N(7))-methyltransferase</fullName>
    </alternativeName>
    <alternativeName>
        <fullName evidence="2">tRNA(m7G46)-methyltransferase</fullName>
    </alternativeName>
</protein>